<name>MNMA_SYMTH</name>
<protein>
    <recommendedName>
        <fullName evidence="1">tRNA-specific 2-thiouridylase MnmA</fullName>
        <ecNumber evidence="1">2.8.1.13</ecNumber>
    </recommendedName>
</protein>
<comment type="function">
    <text evidence="1">Catalyzes the 2-thiolation of uridine at the wobble position (U34) of tRNA, leading to the formation of s(2)U34.</text>
</comment>
<comment type="catalytic activity">
    <reaction evidence="1">
        <text>S-sulfanyl-L-cysteinyl-[protein] + uridine(34) in tRNA + AH2 + ATP = 2-thiouridine(34) in tRNA + L-cysteinyl-[protein] + A + AMP + diphosphate + H(+)</text>
        <dbReference type="Rhea" id="RHEA:47032"/>
        <dbReference type="Rhea" id="RHEA-COMP:10131"/>
        <dbReference type="Rhea" id="RHEA-COMP:11726"/>
        <dbReference type="Rhea" id="RHEA-COMP:11727"/>
        <dbReference type="Rhea" id="RHEA-COMP:11728"/>
        <dbReference type="ChEBI" id="CHEBI:13193"/>
        <dbReference type="ChEBI" id="CHEBI:15378"/>
        <dbReference type="ChEBI" id="CHEBI:17499"/>
        <dbReference type="ChEBI" id="CHEBI:29950"/>
        <dbReference type="ChEBI" id="CHEBI:30616"/>
        <dbReference type="ChEBI" id="CHEBI:33019"/>
        <dbReference type="ChEBI" id="CHEBI:61963"/>
        <dbReference type="ChEBI" id="CHEBI:65315"/>
        <dbReference type="ChEBI" id="CHEBI:87170"/>
        <dbReference type="ChEBI" id="CHEBI:456215"/>
        <dbReference type="EC" id="2.8.1.13"/>
    </reaction>
</comment>
<comment type="subcellular location">
    <subcellularLocation>
        <location evidence="1">Cytoplasm</location>
    </subcellularLocation>
</comment>
<comment type="similarity">
    <text evidence="1">Belongs to the MnmA/TRMU family.</text>
</comment>
<gene>
    <name evidence="1" type="primary">mnmA</name>
    <name type="ordered locus">STH2389</name>
</gene>
<evidence type="ECO:0000255" key="1">
    <source>
        <dbReference type="HAMAP-Rule" id="MF_00144"/>
    </source>
</evidence>
<proteinExistence type="inferred from homology"/>
<dbReference type="EC" id="2.8.1.13" evidence="1"/>
<dbReference type="EMBL" id="AP006840">
    <property type="protein sequence ID" value="BAD41374.1"/>
    <property type="molecule type" value="Genomic_DNA"/>
</dbReference>
<dbReference type="SMR" id="Q67LS2"/>
<dbReference type="STRING" id="292459.STH2389"/>
<dbReference type="KEGG" id="sth:STH2389"/>
<dbReference type="eggNOG" id="COG0482">
    <property type="taxonomic scope" value="Bacteria"/>
</dbReference>
<dbReference type="HOGENOM" id="CLU_035188_0_0_9"/>
<dbReference type="OrthoDB" id="9800696at2"/>
<dbReference type="Proteomes" id="UP000000417">
    <property type="component" value="Chromosome"/>
</dbReference>
<dbReference type="GO" id="GO:0005737">
    <property type="term" value="C:cytoplasm"/>
    <property type="evidence" value="ECO:0007669"/>
    <property type="project" value="UniProtKB-SubCell"/>
</dbReference>
<dbReference type="GO" id="GO:0005524">
    <property type="term" value="F:ATP binding"/>
    <property type="evidence" value="ECO:0007669"/>
    <property type="project" value="UniProtKB-KW"/>
</dbReference>
<dbReference type="GO" id="GO:0000049">
    <property type="term" value="F:tRNA binding"/>
    <property type="evidence" value="ECO:0007669"/>
    <property type="project" value="UniProtKB-KW"/>
</dbReference>
<dbReference type="GO" id="GO:0103016">
    <property type="term" value="F:tRNA-uridine 2-sulfurtransferase activity"/>
    <property type="evidence" value="ECO:0007669"/>
    <property type="project" value="UniProtKB-EC"/>
</dbReference>
<dbReference type="GO" id="GO:0002143">
    <property type="term" value="P:tRNA wobble position uridine thiolation"/>
    <property type="evidence" value="ECO:0007669"/>
    <property type="project" value="TreeGrafter"/>
</dbReference>
<dbReference type="CDD" id="cd01998">
    <property type="entry name" value="MnmA_TRMU-like"/>
    <property type="match status" value="1"/>
</dbReference>
<dbReference type="FunFam" id="2.30.30.280:FF:000001">
    <property type="entry name" value="tRNA-specific 2-thiouridylase MnmA"/>
    <property type="match status" value="1"/>
</dbReference>
<dbReference type="FunFam" id="2.40.30.10:FF:000023">
    <property type="entry name" value="tRNA-specific 2-thiouridylase MnmA"/>
    <property type="match status" value="1"/>
</dbReference>
<dbReference type="FunFam" id="3.40.50.620:FF:000115">
    <property type="entry name" value="tRNA-specific 2-thiouridylase MnmA"/>
    <property type="match status" value="1"/>
</dbReference>
<dbReference type="Gene3D" id="2.30.30.280">
    <property type="entry name" value="Adenine nucleotide alpha hydrolases-like domains"/>
    <property type="match status" value="1"/>
</dbReference>
<dbReference type="Gene3D" id="3.40.50.620">
    <property type="entry name" value="HUPs"/>
    <property type="match status" value="1"/>
</dbReference>
<dbReference type="Gene3D" id="2.40.30.10">
    <property type="entry name" value="Translation factors"/>
    <property type="match status" value="1"/>
</dbReference>
<dbReference type="HAMAP" id="MF_00144">
    <property type="entry name" value="tRNA_thiouridyl_MnmA"/>
    <property type="match status" value="1"/>
</dbReference>
<dbReference type="InterPro" id="IPR004506">
    <property type="entry name" value="MnmA-like"/>
</dbReference>
<dbReference type="InterPro" id="IPR046885">
    <property type="entry name" value="MnmA-like_C"/>
</dbReference>
<dbReference type="InterPro" id="IPR046884">
    <property type="entry name" value="MnmA-like_central"/>
</dbReference>
<dbReference type="InterPro" id="IPR023382">
    <property type="entry name" value="MnmA-like_central_sf"/>
</dbReference>
<dbReference type="InterPro" id="IPR001763">
    <property type="entry name" value="Rhodanese-like_dom"/>
</dbReference>
<dbReference type="InterPro" id="IPR014729">
    <property type="entry name" value="Rossmann-like_a/b/a_fold"/>
</dbReference>
<dbReference type="NCBIfam" id="NF001138">
    <property type="entry name" value="PRK00143.1"/>
    <property type="match status" value="1"/>
</dbReference>
<dbReference type="NCBIfam" id="TIGR00420">
    <property type="entry name" value="trmU"/>
    <property type="match status" value="1"/>
</dbReference>
<dbReference type="PANTHER" id="PTHR11933:SF5">
    <property type="entry name" value="MITOCHONDRIAL TRNA-SPECIFIC 2-THIOURIDYLASE 1"/>
    <property type="match status" value="1"/>
</dbReference>
<dbReference type="PANTHER" id="PTHR11933">
    <property type="entry name" value="TRNA 5-METHYLAMINOMETHYL-2-THIOURIDYLATE -METHYLTRANSFERASE"/>
    <property type="match status" value="1"/>
</dbReference>
<dbReference type="Pfam" id="PF03054">
    <property type="entry name" value="tRNA_Me_trans"/>
    <property type="match status" value="1"/>
</dbReference>
<dbReference type="Pfam" id="PF20258">
    <property type="entry name" value="tRNA_Me_trans_C"/>
    <property type="match status" value="1"/>
</dbReference>
<dbReference type="Pfam" id="PF20259">
    <property type="entry name" value="tRNA_Me_trans_M"/>
    <property type="match status" value="1"/>
</dbReference>
<dbReference type="SUPFAM" id="SSF52402">
    <property type="entry name" value="Adenine nucleotide alpha hydrolases-like"/>
    <property type="match status" value="1"/>
</dbReference>
<organism>
    <name type="scientific">Symbiobacterium thermophilum (strain DSM 24528 / JCM 14929 / IAM 14863 / T)</name>
    <dbReference type="NCBI Taxonomy" id="292459"/>
    <lineage>
        <taxon>Bacteria</taxon>
        <taxon>Bacillati</taxon>
        <taxon>Bacillota</taxon>
        <taxon>Clostridia</taxon>
        <taxon>Eubacteriales</taxon>
        <taxon>Symbiobacteriaceae</taxon>
        <taxon>Symbiobacterium</taxon>
    </lineage>
</organism>
<accession>Q67LS2</accession>
<feature type="chain" id="PRO_0000349822" description="tRNA-specific 2-thiouridylase MnmA">
    <location>
        <begin position="1"/>
        <end position="390"/>
    </location>
</feature>
<feature type="region of interest" description="Interaction with tRNA" evidence="1">
    <location>
        <begin position="180"/>
        <end position="182"/>
    </location>
</feature>
<feature type="active site" description="Nucleophile" evidence="1">
    <location>
        <position position="131"/>
    </location>
</feature>
<feature type="active site" description="Cysteine persulfide intermediate" evidence="1">
    <location>
        <position position="230"/>
    </location>
</feature>
<feature type="binding site" evidence="1">
    <location>
        <begin position="33"/>
        <end position="40"/>
    </location>
    <ligand>
        <name>ATP</name>
        <dbReference type="ChEBI" id="CHEBI:30616"/>
    </ligand>
</feature>
<feature type="binding site" evidence="1">
    <location>
        <position position="59"/>
    </location>
    <ligand>
        <name>ATP</name>
        <dbReference type="ChEBI" id="CHEBI:30616"/>
    </ligand>
</feature>
<feature type="binding site" evidence="1">
    <location>
        <position position="155"/>
    </location>
    <ligand>
        <name>ATP</name>
        <dbReference type="ChEBI" id="CHEBI:30616"/>
    </ligand>
</feature>
<feature type="site" description="Interaction with tRNA" evidence="1">
    <location>
        <position position="156"/>
    </location>
</feature>
<feature type="site" description="Interaction with tRNA" evidence="1">
    <location>
        <position position="369"/>
    </location>
</feature>
<feature type="disulfide bond" description="Alternate" evidence="1">
    <location>
        <begin position="131"/>
        <end position="230"/>
    </location>
</feature>
<sequence length="390" mass="43316">MPAGRRYGRTRRATLYVTKEGGGRPVAKRVLMAMSGGVDSSVAAALLVEQGYEVIGVTMNTWTDDIPEEIQMNQHSGCCSLAAVEDARSVAHKLGIPYYVMNFQGQFARTVIDYFIEEYTRGRTPNPCIACNRYVKFSAFLEKAKQLECDYVATGHYAVIGQDDRFPGRWLLGKSADARKDQTYVLHNLTQEALAHTLFPVGHLQKSEVRALAAKYGFVTADKPDSQEICFVYDNDYGRFLKERAPEAIVPGPILNTRGEVIGQHQGLPLYTIGQRKGLGLTTPRPVYVVDLDVERNAVIVGEDEETYRGGLVASDLNWIAIPGLTFPRRCRAKIRRMAPEAECTIYPIGEDAVRVEFDRPQRAITPGQAVVFYDGDWVLGGGTIERAIN</sequence>
<reference key="1">
    <citation type="journal article" date="2004" name="Nucleic Acids Res.">
        <title>Genome sequence of Symbiobacterium thermophilum, an uncultivable bacterium that depends on microbial commensalism.</title>
        <authorList>
            <person name="Ueda K."/>
            <person name="Yamashita A."/>
            <person name="Ishikawa J."/>
            <person name="Shimada M."/>
            <person name="Watsuji T."/>
            <person name="Morimura K."/>
            <person name="Ikeda H."/>
            <person name="Hattori M."/>
            <person name="Beppu T."/>
        </authorList>
    </citation>
    <scope>NUCLEOTIDE SEQUENCE [LARGE SCALE GENOMIC DNA]</scope>
    <source>
        <strain>DSM 24528 / JCM 14929 / IAM 14863 / T</strain>
    </source>
</reference>
<keyword id="KW-0067">ATP-binding</keyword>
<keyword id="KW-0963">Cytoplasm</keyword>
<keyword id="KW-1015">Disulfide bond</keyword>
<keyword id="KW-0547">Nucleotide-binding</keyword>
<keyword id="KW-1185">Reference proteome</keyword>
<keyword id="KW-0694">RNA-binding</keyword>
<keyword id="KW-0808">Transferase</keyword>
<keyword id="KW-0819">tRNA processing</keyword>
<keyword id="KW-0820">tRNA-binding</keyword>